<keyword id="KW-1185">Reference proteome</keyword>
<keyword id="KW-0687">Ribonucleoprotein</keyword>
<keyword id="KW-0689">Ribosomal protein</keyword>
<keyword id="KW-0694">RNA-binding</keyword>
<keyword id="KW-0699">rRNA-binding</keyword>
<accession>Q46JC2</accession>
<dbReference type="EMBL" id="CP000095">
    <property type="protein sequence ID" value="AAZ58406.1"/>
    <property type="molecule type" value="Genomic_DNA"/>
</dbReference>
<dbReference type="RefSeq" id="WP_011295263.1">
    <property type="nucleotide sequence ID" value="NC_007335.2"/>
</dbReference>
<dbReference type="SMR" id="Q46JC2"/>
<dbReference type="STRING" id="59920.PMN2A_0915"/>
<dbReference type="KEGG" id="pmn:PMN2A_0915"/>
<dbReference type="HOGENOM" id="CLU_061463_6_0_3"/>
<dbReference type="OrthoDB" id="9813334at2"/>
<dbReference type="PhylomeDB" id="Q46JC2"/>
<dbReference type="Proteomes" id="UP000002535">
    <property type="component" value="Chromosome"/>
</dbReference>
<dbReference type="GO" id="GO:0005737">
    <property type="term" value="C:cytoplasm"/>
    <property type="evidence" value="ECO:0007669"/>
    <property type="project" value="UniProtKB-ARBA"/>
</dbReference>
<dbReference type="GO" id="GO:1990904">
    <property type="term" value="C:ribonucleoprotein complex"/>
    <property type="evidence" value="ECO:0007669"/>
    <property type="project" value="UniProtKB-KW"/>
</dbReference>
<dbReference type="GO" id="GO:0005840">
    <property type="term" value="C:ribosome"/>
    <property type="evidence" value="ECO:0007669"/>
    <property type="project" value="UniProtKB-KW"/>
</dbReference>
<dbReference type="GO" id="GO:0019843">
    <property type="term" value="F:rRNA binding"/>
    <property type="evidence" value="ECO:0007669"/>
    <property type="project" value="UniProtKB-UniRule"/>
</dbReference>
<dbReference type="GO" id="GO:0003735">
    <property type="term" value="F:structural constituent of ribosome"/>
    <property type="evidence" value="ECO:0007669"/>
    <property type="project" value="InterPro"/>
</dbReference>
<dbReference type="GO" id="GO:0006412">
    <property type="term" value="P:translation"/>
    <property type="evidence" value="ECO:0007669"/>
    <property type="project" value="UniProtKB-UniRule"/>
</dbReference>
<dbReference type="HAMAP" id="MF_01363">
    <property type="entry name" value="Ribosomal_bL21"/>
    <property type="match status" value="1"/>
</dbReference>
<dbReference type="InterPro" id="IPR028909">
    <property type="entry name" value="bL21-like"/>
</dbReference>
<dbReference type="InterPro" id="IPR036164">
    <property type="entry name" value="bL21-like_sf"/>
</dbReference>
<dbReference type="InterPro" id="IPR001787">
    <property type="entry name" value="Ribosomal_bL21"/>
</dbReference>
<dbReference type="InterPro" id="IPR018258">
    <property type="entry name" value="Ribosomal_bL21_CS"/>
</dbReference>
<dbReference type="NCBIfam" id="TIGR00061">
    <property type="entry name" value="L21"/>
    <property type="match status" value="1"/>
</dbReference>
<dbReference type="PANTHER" id="PTHR21349">
    <property type="entry name" value="50S RIBOSOMAL PROTEIN L21"/>
    <property type="match status" value="1"/>
</dbReference>
<dbReference type="PANTHER" id="PTHR21349:SF0">
    <property type="entry name" value="LARGE RIBOSOMAL SUBUNIT PROTEIN BL21M"/>
    <property type="match status" value="1"/>
</dbReference>
<dbReference type="Pfam" id="PF00829">
    <property type="entry name" value="Ribosomal_L21p"/>
    <property type="match status" value="1"/>
</dbReference>
<dbReference type="SUPFAM" id="SSF141091">
    <property type="entry name" value="L21p-like"/>
    <property type="match status" value="1"/>
</dbReference>
<dbReference type="PROSITE" id="PS01169">
    <property type="entry name" value="RIBOSOMAL_L21"/>
    <property type="match status" value="1"/>
</dbReference>
<evidence type="ECO:0000255" key="1">
    <source>
        <dbReference type="HAMAP-Rule" id="MF_01363"/>
    </source>
</evidence>
<evidence type="ECO:0000305" key="2"/>
<comment type="function">
    <text evidence="1">This protein binds to 23S rRNA in the presence of protein L20.</text>
</comment>
<comment type="subunit">
    <text evidence="1">Part of the 50S ribosomal subunit. Contacts protein L20.</text>
</comment>
<comment type="similarity">
    <text evidence="1">Belongs to the bacterial ribosomal protein bL21 family.</text>
</comment>
<sequence>MADKKSSPKKENPQDKTYAIVEASGKQFWLQPNRYYDFDRCQAEVDDVLTLENVLLLNDGKDLKLGKPYVKDAKVEIKVLEHRRGPKIIVYKMRPKKKTRRKNGHRQELTRVLVQSISIGSNTKKSKAVKTTASKVESE</sequence>
<gene>
    <name evidence="1" type="primary">rplU</name>
    <name evidence="1" type="synonym">rpl21</name>
    <name type="ordered locus">PMN2A_0915</name>
</gene>
<organism>
    <name type="scientific">Prochlorococcus marinus (strain NATL2A)</name>
    <dbReference type="NCBI Taxonomy" id="59920"/>
    <lineage>
        <taxon>Bacteria</taxon>
        <taxon>Bacillati</taxon>
        <taxon>Cyanobacteriota</taxon>
        <taxon>Cyanophyceae</taxon>
        <taxon>Synechococcales</taxon>
        <taxon>Prochlorococcaceae</taxon>
        <taxon>Prochlorococcus</taxon>
    </lineage>
</organism>
<protein>
    <recommendedName>
        <fullName evidence="1">Large ribosomal subunit protein bL21</fullName>
    </recommendedName>
    <alternativeName>
        <fullName evidence="2">50S ribosomal protein L21</fullName>
    </alternativeName>
</protein>
<feature type="chain" id="PRO_0000269362" description="Large ribosomal subunit protein bL21">
    <location>
        <begin position="1"/>
        <end position="139"/>
    </location>
</feature>
<reference key="1">
    <citation type="journal article" date="2007" name="PLoS Genet.">
        <title>Patterns and implications of gene gain and loss in the evolution of Prochlorococcus.</title>
        <authorList>
            <person name="Kettler G.C."/>
            <person name="Martiny A.C."/>
            <person name="Huang K."/>
            <person name="Zucker J."/>
            <person name="Coleman M.L."/>
            <person name="Rodrigue S."/>
            <person name="Chen F."/>
            <person name="Lapidus A."/>
            <person name="Ferriera S."/>
            <person name="Johnson J."/>
            <person name="Steglich C."/>
            <person name="Church G.M."/>
            <person name="Richardson P."/>
            <person name="Chisholm S.W."/>
        </authorList>
    </citation>
    <scope>NUCLEOTIDE SEQUENCE [LARGE SCALE GENOMIC DNA]</scope>
    <source>
        <strain>NATL2A</strain>
    </source>
</reference>
<name>RL21_PROMT</name>
<proteinExistence type="inferred from homology"/>